<feature type="chain" id="PRO_0000089145" description="Actin-related protein T2">
    <location>
        <begin position="1"/>
        <end position="377"/>
    </location>
</feature>
<organism>
    <name type="scientific">Mus musculus</name>
    <name type="common">Mouse</name>
    <dbReference type="NCBI Taxonomy" id="10090"/>
    <lineage>
        <taxon>Eukaryota</taxon>
        <taxon>Metazoa</taxon>
        <taxon>Chordata</taxon>
        <taxon>Craniata</taxon>
        <taxon>Vertebrata</taxon>
        <taxon>Euteleostomi</taxon>
        <taxon>Mammalia</taxon>
        <taxon>Eutheria</taxon>
        <taxon>Euarchontoglires</taxon>
        <taxon>Glires</taxon>
        <taxon>Rodentia</taxon>
        <taxon>Myomorpha</taxon>
        <taxon>Muroidea</taxon>
        <taxon>Muridae</taxon>
        <taxon>Murinae</taxon>
        <taxon>Mus</taxon>
        <taxon>Mus</taxon>
    </lineage>
</organism>
<reference key="1">
    <citation type="journal article" date="2005" name="Science">
        <title>The transcriptional landscape of the mammalian genome.</title>
        <authorList>
            <person name="Carninci P."/>
            <person name="Kasukawa T."/>
            <person name="Katayama S."/>
            <person name="Gough J."/>
            <person name="Frith M.C."/>
            <person name="Maeda N."/>
            <person name="Oyama R."/>
            <person name="Ravasi T."/>
            <person name="Lenhard B."/>
            <person name="Wells C."/>
            <person name="Kodzius R."/>
            <person name="Shimokawa K."/>
            <person name="Bajic V.B."/>
            <person name="Brenner S.E."/>
            <person name="Batalov S."/>
            <person name="Forrest A.R."/>
            <person name="Zavolan M."/>
            <person name="Davis M.J."/>
            <person name="Wilming L.G."/>
            <person name="Aidinis V."/>
            <person name="Allen J.E."/>
            <person name="Ambesi-Impiombato A."/>
            <person name="Apweiler R."/>
            <person name="Aturaliya R.N."/>
            <person name="Bailey T.L."/>
            <person name="Bansal M."/>
            <person name="Baxter L."/>
            <person name="Beisel K.W."/>
            <person name="Bersano T."/>
            <person name="Bono H."/>
            <person name="Chalk A.M."/>
            <person name="Chiu K.P."/>
            <person name="Choudhary V."/>
            <person name="Christoffels A."/>
            <person name="Clutterbuck D.R."/>
            <person name="Crowe M.L."/>
            <person name="Dalla E."/>
            <person name="Dalrymple B.P."/>
            <person name="de Bono B."/>
            <person name="Della Gatta G."/>
            <person name="di Bernardo D."/>
            <person name="Down T."/>
            <person name="Engstrom P."/>
            <person name="Fagiolini M."/>
            <person name="Faulkner G."/>
            <person name="Fletcher C.F."/>
            <person name="Fukushima T."/>
            <person name="Furuno M."/>
            <person name="Futaki S."/>
            <person name="Gariboldi M."/>
            <person name="Georgii-Hemming P."/>
            <person name="Gingeras T.R."/>
            <person name="Gojobori T."/>
            <person name="Green R.E."/>
            <person name="Gustincich S."/>
            <person name="Harbers M."/>
            <person name="Hayashi Y."/>
            <person name="Hensch T.K."/>
            <person name="Hirokawa N."/>
            <person name="Hill D."/>
            <person name="Huminiecki L."/>
            <person name="Iacono M."/>
            <person name="Ikeo K."/>
            <person name="Iwama A."/>
            <person name="Ishikawa T."/>
            <person name="Jakt M."/>
            <person name="Kanapin A."/>
            <person name="Katoh M."/>
            <person name="Kawasawa Y."/>
            <person name="Kelso J."/>
            <person name="Kitamura H."/>
            <person name="Kitano H."/>
            <person name="Kollias G."/>
            <person name="Krishnan S.P."/>
            <person name="Kruger A."/>
            <person name="Kummerfeld S.K."/>
            <person name="Kurochkin I.V."/>
            <person name="Lareau L.F."/>
            <person name="Lazarevic D."/>
            <person name="Lipovich L."/>
            <person name="Liu J."/>
            <person name="Liuni S."/>
            <person name="McWilliam S."/>
            <person name="Madan Babu M."/>
            <person name="Madera M."/>
            <person name="Marchionni L."/>
            <person name="Matsuda H."/>
            <person name="Matsuzawa S."/>
            <person name="Miki H."/>
            <person name="Mignone F."/>
            <person name="Miyake S."/>
            <person name="Morris K."/>
            <person name="Mottagui-Tabar S."/>
            <person name="Mulder N."/>
            <person name="Nakano N."/>
            <person name="Nakauchi H."/>
            <person name="Ng P."/>
            <person name="Nilsson R."/>
            <person name="Nishiguchi S."/>
            <person name="Nishikawa S."/>
            <person name="Nori F."/>
            <person name="Ohara O."/>
            <person name="Okazaki Y."/>
            <person name="Orlando V."/>
            <person name="Pang K.C."/>
            <person name="Pavan W.J."/>
            <person name="Pavesi G."/>
            <person name="Pesole G."/>
            <person name="Petrovsky N."/>
            <person name="Piazza S."/>
            <person name="Reed J."/>
            <person name="Reid J.F."/>
            <person name="Ring B.Z."/>
            <person name="Ringwald M."/>
            <person name="Rost B."/>
            <person name="Ruan Y."/>
            <person name="Salzberg S.L."/>
            <person name="Sandelin A."/>
            <person name="Schneider C."/>
            <person name="Schoenbach C."/>
            <person name="Sekiguchi K."/>
            <person name="Semple C.A."/>
            <person name="Seno S."/>
            <person name="Sessa L."/>
            <person name="Sheng Y."/>
            <person name="Shibata Y."/>
            <person name="Shimada H."/>
            <person name="Shimada K."/>
            <person name="Silva D."/>
            <person name="Sinclair B."/>
            <person name="Sperling S."/>
            <person name="Stupka E."/>
            <person name="Sugiura K."/>
            <person name="Sultana R."/>
            <person name="Takenaka Y."/>
            <person name="Taki K."/>
            <person name="Tammoja K."/>
            <person name="Tan S.L."/>
            <person name="Tang S."/>
            <person name="Taylor M.S."/>
            <person name="Tegner J."/>
            <person name="Teichmann S.A."/>
            <person name="Ueda H.R."/>
            <person name="van Nimwegen E."/>
            <person name="Verardo R."/>
            <person name="Wei C.L."/>
            <person name="Yagi K."/>
            <person name="Yamanishi H."/>
            <person name="Zabarovsky E."/>
            <person name="Zhu S."/>
            <person name="Zimmer A."/>
            <person name="Hide W."/>
            <person name="Bult C."/>
            <person name="Grimmond S.M."/>
            <person name="Teasdale R.D."/>
            <person name="Liu E.T."/>
            <person name="Brusic V."/>
            <person name="Quackenbush J."/>
            <person name="Wahlestedt C."/>
            <person name="Mattick J.S."/>
            <person name="Hume D.A."/>
            <person name="Kai C."/>
            <person name="Sasaki D."/>
            <person name="Tomaru Y."/>
            <person name="Fukuda S."/>
            <person name="Kanamori-Katayama M."/>
            <person name="Suzuki M."/>
            <person name="Aoki J."/>
            <person name="Arakawa T."/>
            <person name="Iida J."/>
            <person name="Imamura K."/>
            <person name="Itoh M."/>
            <person name="Kato T."/>
            <person name="Kawaji H."/>
            <person name="Kawagashira N."/>
            <person name="Kawashima T."/>
            <person name="Kojima M."/>
            <person name="Kondo S."/>
            <person name="Konno H."/>
            <person name="Nakano K."/>
            <person name="Ninomiya N."/>
            <person name="Nishio T."/>
            <person name="Okada M."/>
            <person name="Plessy C."/>
            <person name="Shibata K."/>
            <person name="Shiraki T."/>
            <person name="Suzuki S."/>
            <person name="Tagami M."/>
            <person name="Waki K."/>
            <person name="Watahiki A."/>
            <person name="Okamura-Oho Y."/>
            <person name="Suzuki H."/>
            <person name="Kawai J."/>
            <person name="Hayashizaki Y."/>
        </authorList>
    </citation>
    <scope>NUCLEOTIDE SEQUENCE [LARGE SCALE MRNA]</scope>
    <source>
        <strain>C57BL/6J</strain>
        <tissue>Testis</tissue>
    </source>
</reference>
<reference key="2">
    <citation type="journal article" date="2004" name="Genome Res.">
        <title>The status, quality, and expansion of the NIH full-length cDNA project: the Mammalian Gene Collection (MGC).</title>
        <authorList>
            <consortium name="The MGC Project Team"/>
        </authorList>
    </citation>
    <scope>NUCLEOTIDE SEQUENCE [LARGE SCALE MRNA]</scope>
    <source>
        <tissue>Testis</tissue>
    </source>
</reference>
<protein>
    <recommendedName>
        <fullName>Actin-related protein T2</fullName>
        <shortName>ARP-T2</shortName>
    </recommendedName>
    <alternativeName>
        <fullName>Actin-related protein M2</fullName>
    </alternativeName>
</protein>
<dbReference type="EMBL" id="AK006772">
    <property type="protein sequence ID" value="BAB24733.1"/>
    <property type="molecule type" value="mRNA"/>
</dbReference>
<dbReference type="EMBL" id="BC052344">
    <property type="protein sequence ID" value="AAH52344.1"/>
    <property type="molecule type" value="mRNA"/>
</dbReference>
<dbReference type="CCDS" id="CCDS19014.1"/>
<dbReference type="RefSeq" id="NP_082789.1">
    <property type="nucleotide sequence ID" value="NM_028513.3"/>
</dbReference>
<dbReference type="SMR" id="Q9D9L5"/>
<dbReference type="FunCoup" id="Q9D9L5">
    <property type="interactions" value="12"/>
</dbReference>
<dbReference type="STRING" id="10090.ENSMUSP00000050377"/>
<dbReference type="iPTMnet" id="Q9D9L5"/>
<dbReference type="PhosphoSitePlus" id="Q9D9L5"/>
<dbReference type="SwissPalm" id="Q9D9L5"/>
<dbReference type="PaxDb" id="10090-ENSMUSP00000050377"/>
<dbReference type="ProteomicsDB" id="285857"/>
<dbReference type="Antibodypedia" id="1628">
    <property type="antibodies" value="131 antibodies from 25 providers"/>
</dbReference>
<dbReference type="DNASU" id="73353"/>
<dbReference type="Ensembl" id="ENSMUST00000060062.5">
    <property type="protein sequence ID" value="ENSMUSP00000050377.4"/>
    <property type="gene ID" value="ENSMUSG00000051276.5"/>
</dbReference>
<dbReference type="GeneID" id="73353"/>
<dbReference type="KEGG" id="mmu:73353"/>
<dbReference type="UCSC" id="uc008wca.2">
    <property type="organism name" value="mouse"/>
</dbReference>
<dbReference type="AGR" id="MGI:1920603"/>
<dbReference type="CTD" id="140625"/>
<dbReference type="MGI" id="MGI:1920603">
    <property type="gene designation" value="Actrt2"/>
</dbReference>
<dbReference type="VEuPathDB" id="HostDB:ENSMUSG00000051276"/>
<dbReference type="eggNOG" id="KOG0676">
    <property type="taxonomic scope" value="Eukaryota"/>
</dbReference>
<dbReference type="GeneTree" id="ENSGT00940000162911"/>
<dbReference type="HOGENOM" id="CLU_027965_0_2_1"/>
<dbReference type="InParanoid" id="Q9D9L5"/>
<dbReference type="OMA" id="DQLYQAP"/>
<dbReference type="OrthoDB" id="10053773at2759"/>
<dbReference type="PhylomeDB" id="Q9D9L5"/>
<dbReference type="TreeFam" id="TF354237"/>
<dbReference type="BioGRID-ORCS" id="73353">
    <property type="hits" value="2 hits in 77 CRISPR screens"/>
</dbReference>
<dbReference type="ChiTaRS" id="Actrt2">
    <property type="organism name" value="mouse"/>
</dbReference>
<dbReference type="PRO" id="PR:Q9D9L5"/>
<dbReference type="Proteomes" id="UP000000589">
    <property type="component" value="Chromosome 4"/>
</dbReference>
<dbReference type="RNAct" id="Q9D9L5">
    <property type="molecule type" value="protein"/>
</dbReference>
<dbReference type="Bgee" id="ENSMUSG00000051276">
    <property type="expression patterns" value="Expressed in spermatid and 28 other cell types or tissues"/>
</dbReference>
<dbReference type="GO" id="GO:0005737">
    <property type="term" value="C:cytoplasm"/>
    <property type="evidence" value="ECO:0007669"/>
    <property type="project" value="UniProtKB-KW"/>
</dbReference>
<dbReference type="GO" id="GO:0005856">
    <property type="term" value="C:cytoskeleton"/>
    <property type="evidence" value="ECO:0007669"/>
    <property type="project" value="UniProtKB-SubCell"/>
</dbReference>
<dbReference type="CDD" id="cd13397">
    <property type="entry name" value="ASKHA_NBD_actin_Arp-T1-3"/>
    <property type="match status" value="1"/>
</dbReference>
<dbReference type="FunFam" id="3.90.640.10:FF:000007">
    <property type="entry name" value="Actin like 7B"/>
    <property type="match status" value="1"/>
</dbReference>
<dbReference type="FunFam" id="3.30.420.40:FF:000018">
    <property type="entry name" value="Actin-like protein (Centractin)"/>
    <property type="match status" value="1"/>
</dbReference>
<dbReference type="Gene3D" id="3.30.420.40">
    <property type="match status" value="2"/>
</dbReference>
<dbReference type="Gene3D" id="3.90.640.10">
    <property type="entry name" value="Actin, Chain A, domain 4"/>
    <property type="match status" value="1"/>
</dbReference>
<dbReference type="InterPro" id="IPR004000">
    <property type="entry name" value="Actin"/>
</dbReference>
<dbReference type="InterPro" id="IPR020902">
    <property type="entry name" value="Actin/actin-like_CS"/>
</dbReference>
<dbReference type="InterPro" id="IPR043129">
    <property type="entry name" value="ATPase_NBD"/>
</dbReference>
<dbReference type="PANTHER" id="PTHR11937">
    <property type="entry name" value="ACTIN"/>
    <property type="match status" value="1"/>
</dbReference>
<dbReference type="Pfam" id="PF00022">
    <property type="entry name" value="Actin"/>
    <property type="match status" value="1"/>
</dbReference>
<dbReference type="PRINTS" id="PR00190">
    <property type="entry name" value="ACTIN"/>
</dbReference>
<dbReference type="SMART" id="SM00268">
    <property type="entry name" value="ACTIN"/>
    <property type="match status" value="1"/>
</dbReference>
<dbReference type="SUPFAM" id="SSF53067">
    <property type="entry name" value="Actin-like ATPase domain"/>
    <property type="match status" value="2"/>
</dbReference>
<dbReference type="PROSITE" id="PS01132">
    <property type="entry name" value="ACTINS_ACT_LIKE"/>
    <property type="match status" value="1"/>
</dbReference>
<name>ACTT2_MOUSE</name>
<accession>Q9D9L5</accession>
<comment type="subcellular location">
    <subcellularLocation>
        <location evidence="1">Cytoplasm</location>
        <location evidence="1">Cytoskeleton</location>
    </subcellularLocation>
</comment>
<comment type="similarity">
    <text evidence="2">Belongs to the actin family.</text>
</comment>
<keyword id="KW-0963">Cytoplasm</keyword>
<keyword id="KW-0206">Cytoskeleton</keyword>
<keyword id="KW-1185">Reference proteome</keyword>
<gene>
    <name type="primary">Actrt2</name>
    <name type="synonym">Arpm2</name>
</gene>
<proteinExistence type="evidence at transcript level"/>
<evidence type="ECO:0000250" key="1"/>
<evidence type="ECO:0000305" key="2"/>
<sequence length="377" mass="41616">MFNPLVLDSPSVIFDNGSGLCKAGLSGEIGPRHVTSSVVGYPKFKAPPTGASQKKYFVGEEALYKQEALSLHYPIDRGLVTSWDDVEKLWRHLFEWELGVKPCERPVLVTEPSLNPRENREKTAEMMFETFEVPAFYLSDQAVLALYSSACVTGLVVDSGDGVTCTVPIYEGYSLPHAVSKLYVAGKDITELLTRLLLASGRAFPCPLEKALADDIKEKLCYVALEPEEELSRRAEDVLREYKLPDGNVIYIGDQLYQAPEVLFSPDQLGTHGPGLAQMASNSITKCDADIQKTLFGEIVLSGGSTLFQGLDDRLLKELEQLASKGVPIKITAPPDRWFSTWIGASIVTSLSSFKQMWITAADFKEFGVSVVQRRCF</sequence>